<dbReference type="EMBL" id="CU329670">
    <property type="protein sequence ID" value="CAB57403.1"/>
    <property type="molecule type" value="Genomic_DNA"/>
</dbReference>
<dbReference type="PIR" id="T37733">
    <property type="entry name" value="T37733"/>
</dbReference>
<dbReference type="RefSeq" id="NP_594573.1">
    <property type="nucleotide sequence ID" value="NM_001020002.2"/>
</dbReference>
<dbReference type="BioGRID" id="278095">
    <property type="interactions" value="207"/>
</dbReference>
<dbReference type="FunCoup" id="Q9UTH8">
    <property type="interactions" value="302"/>
</dbReference>
<dbReference type="STRING" id="284812.Q9UTH8"/>
<dbReference type="iPTMnet" id="Q9UTH8"/>
<dbReference type="PaxDb" id="4896-SPAC16.05c.1"/>
<dbReference type="EnsemblFungi" id="SPAC16.05c.1">
    <property type="protein sequence ID" value="SPAC16.05c.1:pep"/>
    <property type="gene ID" value="SPAC16.05c"/>
</dbReference>
<dbReference type="GeneID" id="2541598"/>
<dbReference type="KEGG" id="spo:2541598"/>
<dbReference type="PomBase" id="SPAC16.05c">
    <property type="gene designation" value="sfp1"/>
</dbReference>
<dbReference type="VEuPathDB" id="FungiDB:SPAC16.05c"/>
<dbReference type="eggNOG" id="KOG4124">
    <property type="taxonomic scope" value="Eukaryota"/>
</dbReference>
<dbReference type="HOGENOM" id="CLU_619885_0_0_1"/>
<dbReference type="InParanoid" id="Q9UTH8"/>
<dbReference type="OMA" id="NCDKAYK"/>
<dbReference type="PhylomeDB" id="Q9UTH8"/>
<dbReference type="PRO" id="PR:Q9UTH8"/>
<dbReference type="Proteomes" id="UP000002485">
    <property type="component" value="Chromosome I"/>
</dbReference>
<dbReference type="GO" id="GO:0005829">
    <property type="term" value="C:cytosol"/>
    <property type="evidence" value="ECO:0007005"/>
    <property type="project" value="PomBase"/>
</dbReference>
<dbReference type="GO" id="GO:0005634">
    <property type="term" value="C:nucleus"/>
    <property type="evidence" value="ECO:0007005"/>
    <property type="project" value="PomBase"/>
</dbReference>
<dbReference type="GO" id="GO:0001228">
    <property type="term" value="F:DNA-binding transcription activator activity, RNA polymerase II-specific"/>
    <property type="evidence" value="ECO:0000315"/>
    <property type="project" value="PomBase"/>
</dbReference>
<dbReference type="GO" id="GO:0000978">
    <property type="term" value="F:RNA polymerase II cis-regulatory region sequence-specific DNA binding"/>
    <property type="evidence" value="ECO:0000266"/>
    <property type="project" value="PomBase"/>
</dbReference>
<dbReference type="GO" id="GO:0008270">
    <property type="term" value="F:zinc ion binding"/>
    <property type="evidence" value="ECO:0007669"/>
    <property type="project" value="UniProtKB-KW"/>
</dbReference>
<dbReference type="GO" id="GO:0060963">
    <property type="term" value="P:positive regulation of ribosomal protein gene transcription by RNA polymerase II"/>
    <property type="evidence" value="ECO:0000315"/>
    <property type="project" value="PomBase"/>
</dbReference>
<dbReference type="GO" id="GO:0090070">
    <property type="term" value="P:positive regulation of ribosome biogenesis"/>
    <property type="evidence" value="ECO:0000315"/>
    <property type="project" value="PomBase"/>
</dbReference>
<dbReference type="Gene3D" id="3.30.160.60">
    <property type="entry name" value="Classic Zinc Finger"/>
    <property type="match status" value="1"/>
</dbReference>
<dbReference type="InterPro" id="IPR051580">
    <property type="entry name" value="ZnF-Chromatin_assoc"/>
</dbReference>
<dbReference type="InterPro" id="IPR036236">
    <property type="entry name" value="Znf_C2H2_sf"/>
</dbReference>
<dbReference type="InterPro" id="IPR013087">
    <property type="entry name" value="Znf_C2H2_type"/>
</dbReference>
<dbReference type="PANTHER" id="PTHR23057">
    <property type="entry name" value="JUXTAPOSED WITH ANOTHER ZINC FINGER PROTEIN 1"/>
    <property type="match status" value="1"/>
</dbReference>
<dbReference type="PANTHER" id="PTHR23057:SF0">
    <property type="entry name" value="JUXTAPOSED WITH ANOTHER ZINC FINGER PROTEIN 1"/>
    <property type="match status" value="1"/>
</dbReference>
<dbReference type="SMART" id="SM00355">
    <property type="entry name" value="ZnF_C2H2"/>
    <property type="match status" value="3"/>
</dbReference>
<dbReference type="SUPFAM" id="SSF57667">
    <property type="entry name" value="beta-beta-alpha zinc fingers"/>
    <property type="match status" value="1"/>
</dbReference>
<dbReference type="PROSITE" id="PS00028">
    <property type="entry name" value="ZINC_FINGER_C2H2_1"/>
    <property type="match status" value="2"/>
</dbReference>
<dbReference type="PROSITE" id="PS50157">
    <property type="entry name" value="ZINC_FINGER_C2H2_2"/>
    <property type="match status" value="2"/>
</dbReference>
<proteinExistence type="predicted"/>
<keyword id="KW-0963">Cytoplasm</keyword>
<keyword id="KW-0479">Metal-binding</keyword>
<keyword id="KW-0539">Nucleus</keyword>
<keyword id="KW-1185">Reference proteome</keyword>
<keyword id="KW-0677">Repeat</keyword>
<keyword id="KW-0862">Zinc</keyword>
<keyword id="KW-0863">Zinc-finger</keyword>
<evidence type="ECO:0000255" key="1">
    <source>
        <dbReference type="PROSITE-ProRule" id="PRU00042"/>
    </source>
</evidence>
<evidence type="ECO:0000256" key="2">
    <source>
        <dbReference type="SAM" id="MobiDB-lite"/>
    </source>
</evidence>
<evidence type="ECO:0000269" key="3">
    <source>
    </source>
</evidence>
<reference key="1">
    <citation type="journal article" date="2002" name="Nature">
        <title>The genome sequence of Schizosaccharomyces pombe.</title>
        <authorList>
            <person name="Wood V."/>
            <person name="Gwilliam R."/>
            <person name="Rajandream M.A."/>
            <person name="Lyne M.H."/>
            <person name="Lyne R."/>
            <person name="Stewart A."/>
            <person name="Sgouros J.G."/>
            <person name="Peat N."/>
            <person name="Hayles J."/>
            <person name="Baker S.G."/>
            <person name="Basham D."/>
            <person name="Bowman S."/>
            <person name="Brooks K."/>
            <person name="Brown D."/>
            <person name="Brown S."/>
            <person name="Chillingworth T."/>
            <person name="Churcher C.M."/>
            <person name="Collins M."/>
            <person name="Connor R."/>
            <person name="Cronin A."/>
            <person name="Davis P."/>
            <person name="Feltwell T."/>
            <person name="Fraser A."/>
            <person name="Gentles S."/>
            <person name="Goble A."/>
            <person name="Hamlin N."/>
            <person name="Harris D.E."/>
            <person name="Hidalgo J."/>
            <person name="Hodgson G."/>
            <person name="Holroyd S."/>
            <person name="Hornsby T."/>
            <person name="Howarth S."/>
            <person name="Huckle E.J."/>
            <person name="Hunt S."/>
            <person name="Jagels K."/>
            <person name="James K.D."/>
            <person name="Jones L."/>
            <person name="Jones M."/>
            <person name="Leather S."/>
            <person name="McDonald S."/>
            <person name="McLean J."/>
            <person name="Mooney P."/>
            <person name="Moule S."/>
            <person name="Mungall K.L."/>
            <person name="Murphy L.D."/>
            <person name="Niblett D."/>
            <person name="Odell C."/>
            <person name="Oliver K."/>
            <person name="O'Neil S."/>
            <person name="Pearson D."/>
            <person name="Quail M.A."/>
            <person name="Rabbinowitsch E."/>
            <person name="Rutherford K.M."/>
            <person name="Rutter S."/>
            <person name="Saunders D."/>
            <person name="Seeger K."/>
            <person name="Sharp S."/>
            <person name="Skelton J."/>
            <person name="Simmonds M.N."/>
            <person name="Squares R."/>
            <person name="Squares S."/>
            <person name="Stevens K."/>
            <person name="Taylor K."/>
            <person name="Taylor R.G."/>
            <person name="Tivey A."/>
            <person name="Walsh S.V."/>
            <person name="Warren T."/>
            <person name="Whitehead S."/>
            <person name="Woodward J.R."/>
            <person name="Volckaert G."/>
            <person name="Aert R."/>
            <person name="Robben J."/>
            <person name="Grymonprez B."/>
            <person name="Weltjens I."/>
            <person name="Vanstreels E."/>
            <person name="Rieger M."/>
            <person name="Schaefer M."/>
            <person name="Mueller-Auer S."/>
            <person name="Gabel C."/>
            <person name="Fuchs M."/>
            <person name="Duesterhoeft A."/>
            <person name="Fritzc C."/>
            <person name="Holzer E."/>
            <person name="Moestl D."/>
            <person name="Hilbert H."/>
            <person name="Borzym K."/>
            <person name="Langer I."/>
            <person name="Beck A."/>
            <person name="Lehrach H."/>
            <person name="Reinhardt R."/>
            <person name="Pohl T.M."/>
            <person name="Eger P."/>
            <person name="Zimmermann W."/>
            <person name="Wedler H."/>
            <person name="Wambutt R."/>
            <person name="Purnelle B."/>
            <person name="Goffeau A."/>
            <person name="Cadieu E."/>
            <person name="Dreano S."/>
            <person name="Gloux S."/>
            <person name="Lelaure V."/>
            <person name="Mottier S."/>
            <person name="Galibert F."/>
            <person name="Aves S.J."/>
            <person name="Xiang Z."/>
            <person name="Hunt C."/>
            <person name="Moore K."/>
            <person name="Hurst S.M."/>
            <person name="Lucas M."/>
            <person name="Rochet M."/>
            <person name="Gaillardin C."/>
            <person name="Tallada V.A."/>
            <person name="Garzon A."/>
            <person name="Thode G."/>
            <person name="Daga R.R."/>
            <person name="Cruzado L."/>
            <person name="Jimenez J."/>
            <person name="Sanchez M."/>
            <person name="del Rey F."/>
            <person name="Benito J."/>
            <person name="Dominguez A."/>
            <person name="Revuelta J.L."/>
            <person name="Moreno S."/>
            <person name="Armstrong J."/>
            <person name="Forsburg S.L."/>
            <person name="Cerutti L."/>
            <person name="Lowe T."/>
            <person name="McCombie W.R."/>
            <person name="Paulsen I."/>
            <person name="Potashkin J."/>
            <person name="Shpakovski G.V."/>
            <person name="Ussery D."/>
            <person name="Barrell B.G."/>
            <person name="Nurse P."/>
        </authorList>
    </citation>
    <scope>NUCLEOTIDE SEQUENCE [LARGE SCALE GENOMIC DNA]</scope>
    <source>
        <strain>972 / ATCC 24843</strain>
    </source>
</reference>
<reference key="2">
    <citation type="journal article" date="2006" name="Nat. Biotechnol.">
        <title>ORFeome cloning and global analysis of protein localization in the fission yeast Schizosaccharomyces pombe.</title>
        <authorList>
            <person name="Matsuyama A."/>
            <person name="Arai R."/>
            <person name="Yashiroda Y."/>
            <person name="Shirai A."/>
            <person name="Kamata A."/>
            <person name="Sekido S."/>
            <person name="Kobayashi Y."/>
            <person name="Hashimoto A."/>
            <person name="Hamamoto M."/>
            <person name="Hiraoka Y."/>
            <person name="Horinouchi S."/>
            <person name="Yoshida M."/>
        </authorList>
    </citation>
    <scope>SUBCELLULAR LOCATION [LARGE SCALE ANALYSIS]</scope>
</reference>
<protein>
    <recommendedName>
        <fullName>Zinc finger protein sfp1</fullName>
    </recommendedName>
</protein>
<gene>
    <name type="primary">sfp1</name>
    <name type="ORF">SPAC16.05c</name>
</gene>
<sequence>MPSLALPINKPSHHNVNYNGNSFNSIHATSFGMSPQSWGNSFSGQAWLRDTIPSLSNVVESQTIPEEDSTSYLNRLEEAFCRDFRCCGQTLEDLHQLIHHYEEQHAVLATDSAVPQEYSLDSNNAAQSNHSHIQALKQRERIRMHDLADQLGTSEISDNSAVLPFAFPANGGAPGPYRVSVVVPAAAAAAAAAASSDMSSDEASSQAETTGTPKKMPESLVMDASSPLSDMSMSIDVGESAANNVFAFNQKDMVDSTYLPPFNYDHDVFSFAPSVASADQFTESSMSPTPEVVSPAATNSAISSPFVRKSSSDLEAKPSKKQRSTPAFSHDSPLTIDYPGSNLVVVDKPYKCPVPNCDKAYKNQNGLKYHKLHGHCSPITTPTPAPIPHQGFVVENKPYRCEVCSKRYKNLNGLKYHRTHSHLQVSMAQAQREVQMNFMRTA</sequence>
<accession>Q9UTH8</accession>
<comment type="subcellular location">
    <subcellularLocation>
        <location evidence="3">Cytoplasm</location>
    </subcellularLocation>
    <subcellularLocation>
        <location evidence="3">Nucleus</location>
    </subcellularLocation>
</comment>
<organism>
    <name type="scientific">Schizosaccharomyces pombe (strain 972 / ATCC 24843)</name>
    <name type="common">Fission yeast</name>
    <dbReference type="NCBI Taxonomy" id="284812"/>
    <lineage>
        <taxon>Eukaryota</taxon>
        <taxon>Fungi</taxon>
        <taxon>Dikarya</taxon>
        <taxon>Ascomycota</taxon>
        <taxon>Taphrinomycotina</taxon>
        <taxon>Schizosaccharomycetes</taxon>
        <taxon>Schizosaccharomycetales</taxon>
        <taxon>Schizosaccharomycetaceae</taxon>
        <taxon>Schizosaccharomyces</taxon>
    </lineage>
</organism>
<feature type="chain" id="PRO_0000310835" description="Zinc finger protein sfp1">
    <location>
        <begin position="1"/>
        <end position="442"/>
    </location>
</feature>
<feature type="zinc finger region" description="C2H2-type 1" evidence="1">
    <location>
        <begin position="350"/>
        <end position="375"/>
    </location>
</feature>
<feature type="zinc finger region" description="C2H2-type 2" evidence="1">
    <location>
        <begin position="399"/>
        <end position="422"/>
    </location>
</feature>
<feature type="region of interest" description="Disordered" evidence="2">
    <location>
        <begin position="193"/>
        <end position="219"/>
    </location>
</feature>
<feature type="region of interest" description="Disordered" evidence="2">
    <location>
        <begin position="304"/>
        <end position="333"/>
    </location>
</feature>
<feature type="compositionally biased region" description="Low complexity" evidence="2">
    <location>
        <begin position="193"/>
        <end position="208"/>
    </location>
</feature>
<name>SFP1_SCHPO</name>